<name>ISCS_SALPC</name>
<organism>
    <name type="scientific">Salmonella paratyphi C (strain RKS4594)</name>
    <dbReference type="NCBI Taxonomy" id="476213"/>
    <lineage>
        <taxon>Bacteria</taxon>
        <taxon>Pseudomonadati</taxon>
        <taxon>Pseudomonadota</taxon>
        <taxon>Gammaproteobacteria</taxon>
        <taxon>Enterobacterales</taxon>
        <taxon>Enterobacteriaceae</taxon>
        <taxon>Salmonella</taxon>
    </lineage>
</organism>
<keyword id="KW-0001">2Fe-2S</keyword>
<keyword id="KW-0963">Cytoplasm</keyword>
<keyword id="KW-0408">Iron</keyword>
<keyword id="KW-0411">Iron-sulfur</keyword>
<keyword id="KW-0479">Metal-binding</keyword>
<keyword id="KW-0663">Pyridoxal phosphate</keyword>
<keyword id="KW-0808">Transferase</keyword>
<protein>
    <recommendedName>
        <fullName evidence="1">Cysteine desulfurase IscS</fullName>
        <ecNumber evidence="1">2.8.1.7</ecNumber>
    </recommendedName>
</protein>
<feature type="chain" id="PRO_1000133120" description="Cysteine desulfurase IscS">
    <location>
        <begin position="1"/>
        <end position="404"/>
    </location>
</feature>
<feature type="active site" description="Cysteine persulfide intermediate" evidence="1">
    <location>
        <position position="328"/>
    </location>
</feature>
<feature type="binding site" evidence="1">
    <location>
        <begin position="75"/>
        <end position="76"/>
    </location>
    <ligand>
        <name>pyridoxal 5'-phosphate</name>
        <dbReference type="ChEBI" id="CHEBI:597326"/>
    </ligand>
</feature>
<feature type="binding site" evidence="1">
    <location>
        <position position="155"/>
    </location>
    <ligand>
        <name>pyridoxal 5'-phosphate</name>
        <dbReference type="ChEBI" id="CHEBI:597326"/>
    </ligand>
</feature>
<feature type="binding site" evidence="1">
    <location>
        <position position="183"/>
    </location>
    <ligand>
        <name>pyridoxal 5'-phosphate</name>
        <dbReference type="ChEBI" id="CHEBI:597326"/>
    </ligand>
</feature>
<feature type="binding site" evidence="1">
    <location>
        <begin position="203"/>
        <end position="205"/>
    </location>
    <ligand>
        <name>pyridoxal 5'-phosphate</name>
        <dbReference type="ChEBI" id="CHEBI:597326"/>
    </ligand>
</feature>
<feature type="binding site" evidence="1">
    <location>
        <position position="243"/>
    </location>
    <ligand>
        <name>pyridoxal 5'-phosphate</name>
        <dbReference type="ChEBI" id="CHEBI:597326"/>
    </ligand>
</feature>
<feature type="binding site" description="via persulfide group" evidence="1">
    <location>
        <position position="328"/>
    </location>
    <ligand>
        <name>[2Fe-2S] cluster</name>
        <dbReference type="ChEBI" id="CHEBI:190135"/>
        <note>ligand shared with IscU</note>
    </ligand>
</feature>
<feature type="modified residue" description="N6-(pyridoxal phosphate)lysine" evidence="1">
    <location>
        <position position="206"/>
    </location>
</feature>
<accession>C0PYK7</accession>
<gene>
    <name evidence="1" type="primary">iscS</name>
    <name type="ordered locus">SPC_1108</name>
</gene>
<comment type="function">
    <text evidence="1">Master enzyme that delivers sulfur to a number of partners involved in Fe-S cluster assembly, tRNA modification or cofactor biosynthesis. Catalyzes the removal of elemental sulfur and selenium atoms from cysteine and selenocysteine to produce alanine. Functions as a sulfur delivery protein for Fe-S cluster synthesis onto IscU, an Fe-S scaffold assembly protein, as well as other S acceptor proteins. Also functions as a selenium delivery protein in the pathway for the biosynthesis of selenophosphate.</text>
</comment>
<comment type="catalytic activity">
    <reaction evidence="1">
        <text>(sulfur carrier)-H + L-cysteine = (sulfur carrier)-SH + L-alanine</text>
        <dbReference type="Rhea" id="RHEA:43892"/>
        <dbReference type="Rhea" id="RHEA-COMP:14737"/>
        <dbReference type="Rhea" id="RHEA-COMP:14739"/>
        <dbReference type="ChEBI" id="CHEBI:29917"/>
        <dbReference type="ChEBI" id="CHEBI:35235"/>
        <dbReference type="ChEBI" id="CHEBI:57972"/>
        <dbReference type="ChEBI" id="CHEBI:64428"/>
        <dbReference type="EC" id="2.8.1.7"/>
    </reaction>
</comment>
<comment type="cofactor">
    <cofactor evidence="1">
        <name>pyridoxal 5'-phosphate</name>
        <dbReference type="ChEBI" id="CHEBI:597326"/>
    </cofactor>
</comment>
<comment type="pathway">
    <text evidence="1">Cofactor biosynthesis; iron-sulfur cluster biosynthesis.</text>
</comment>
<comment type="subunit">
    <text evidence="1">Homodimer. Forms a heterotetramer with IscU, interacts with other sulfur acceptors.</text>
</comment>
<comment type="subcellular location">
    <subcellularLocation>
        <location evidence="1">Cytoplasm</location>
    </subcellularLocation>
</comment>
<comment type="similarity">
    <text evidence="1">Belongs to the class-V pyridoxal-phosphate-dependent aminotransferase family. NifS/IscS subfamily.</text>
</comment>
<proteinExistence type="inferred from homology"/>
<sequence>MKLPIYLDYSATTPVDPRVAEKMMQFLTLDGTFGNPASRSHRFGWQAEEAVDIARNQISELVGADPREIVFTSGATESDNLAIKGAANFYQKKGKHIITSKTEHKAVLDTCRQLEREGFEVTYLAPQRNGIIDLNELEAAMRDDTILVSIMHVNNEIGVVQDIATIGEMCRARGIIYHVDATQSVGKLPIDLSQLKVDLMSFSGHKIYGPKGIGALYVRRKPRIRIEAQMHGGGHERGMRSGTLPVHQIVGMGEAYRIVKEEMETEMARLRGLRNRLWNGIKDIEEVYLNGDLEQGAPNILNVSFNYVEGESLIMALKDLAVSSGSACTSASLEPSYVLRALGMNDELAHSSIRFSLGRFTTEEEIDYTIDLVRKSIGRLRDLSPLWEMYKQGVDLNSIEWAHH</sequence>
<evidence type="ECO:0000255" key="1">
    <source>
        <dbReference type="HAMAP-Rule" id="MF_00331"/>
    </source>
</evidence>
<dbReference type="EC" id="2.8.1.7" evidence="1"/>
<dbReference type="EMBL" id="CP000857">
    <property type="protein sequence ID" value="ACN45274.1"/>
    <property type="molecule type" value="Genomic_DNA"/>
</dbReference>
<dbReference type="RefSeq" id="WP_000775272.1">
    <property type="nucleotide sequence ID" value="NC_012125.1"/>
</dbReference>
<dbReference type="SMR" id="C0PYK7"/>
<dbReference type="KEGG" id="sei:SPC_1108"/>
<dbReference type="HOGENOM" id="CLU_003433_0_2_6"/>
<dbReference type="UniPathway" id="UPA00266"/>
<dbReference type="Proteomes" id="UP000001599">
    <property type="component" value="Chromosome"/>
</dbReference>
<dbReference type="GO" id="GO:1990221">
    <property type="term" value="C:L-cysteine desulfurase complex"/>
    <property type="evidence" value="ECO:0007669"/>
    <property type="project" value="UniProtKB-ARBA"/>
</dbReference>
<dbReference type="GO" id="GO:0051537">
    <property type="term" value="F:2 iron, 2 sulfur cluster binding"/>
    <property type="evidence" value="ECO:0007669"/>
    <property type="project" value="UniProtKB-UniRule"/>
</dbReference>
<dbReference type="GO" id="GO:0031071">
    <property type="term" value="F:cysteine desulfurase activity"/>
    <property type="evidence" value="ECO:0007669"/>
    <property type="project" value="UniProtKB-UniRule"/>
</dbReference>
<dbReference type="GO" id="GO:0046872">
    <property type="term" value="F:metal ion binding"/>
    <property type="evidence" value="ECO:0007669"/>
    <property type="project" value="UniProtKB-KW"/>
</dbReference>
<dbReference type="GO" id="GO:0030170">
    <property type="term" value="F:pyridoxal phosphate binding"/>
    <property type="evidence" value="ECO:0007669"/>
    <property type="project" value="UniProtKB-UniRule"/>
</dbReference>
<dbReference type="GO" id="GO:0044571">
    <property type="term" value="P:[2Fe-2S] cluster assembly"/>
    <property type="evidence" value="ECO:0007669"/>
    <property type="project" value="UniProtKB-UniRule"/>
</dbReference>
<dbReference type="FunFam" id="3.40.640.10:FF:000003">
    <property type="entry name" value="Cysteine desulfurase IscS"/>
    <property type="match status" value="1"/>
</dbReference>
<dbReference type="FunFam" id="3.90.1150.10:FF:000002">
    <property type="entry name" value="Cysteine desulfurase IscS"/>
    <property type="match status" value="1"/>
</dbReference>
<dbReference type="Gene3D" id="3.90.1150.10">
    <property type="entry name" value="Aspartate Aminotransferase, domain 1"/>
    <property type="match status" value="1"/>
</dbReference>
<dbReference type="Gene3D" id="3.40.640.10">
    <property type="entry name" value="Type I PLP-dependent aspartate aminotransferase-like (Major domain)"/>
    <property type="match status" value="1"/>
</dbReference>
<dbReference type="HAMAP" id="MF_00331">
    <property type="entry name" value="Cys_desulf_IscS"/>
    <property type="match status" value="1"/>
</dbReference>
<dbReference type="InterPro" id="IPR000192">
    <property type="entry name" value="Aminotrans_V_dom"/>
</dbReference>
<dbReference type="InterPro" id="IPR020578">
    <property type="entry name" value="Aminotrans_V_PyrdxlP_BS"/>
</dbReference>
<dbReference type="InterPro" id="IPR010240">
    <property type="entry name" value="Cys_deSase_IscS"/>
</dbReference>
<dbReference type="InterPro" id="IPR016454">
    <property type="entry name" value="Cysteine_dSase"/>
</dbReference>
<dbReference type="InterPro" id="IPR015424">
    <property type="entry name" value="PyrdxlP-dep_Trfase"/>
</dbReference>
<dbReference type="InterPro" id="IPR015421">
    <property type="entry name" value="PyrdxlP-dep_Trfase_major"/>
</dbReference>
<dbReference type="InterPro" id="IPR015422">
    <property type="entry name" value="PyrdxlP-dep_Trfase_small"/>
</dbReference>
<dbReference type="NCBIfam" id="TIGR02006">
    <property type="entry name" value="IscS"/>
    <property type="match status" value="1"/>
</dbReference>
<dbReference type="NCBIfam" id="NF002806">
    <property type="entry name" value="PRK02948.1"/>
    <property type="match status" value="1"/>
</dbReference>
<dbReference type="NCBIfam" id="NF010611">
    <property type="entry name" value="PRK14012.1"/>
    <property type="match status" value="1"/>
</dbReference>
<dbReference type="PANTHER" id="PTHR11601:SF34">
    <property type="entry name" value="CYSTEINE DESULFURASE"/>
    <property type="match status" value="1"/>
</dbReference>
<dbReference type="PANTHER" id="PTHR11601">
    <property type="entry name" value="CYSTEINE DESULFURYLASE FAMILY MEMBER"/>
    <property type="match status" value="1"/>
</dbReference>
<dbReference type="Pfam" id="PF00266">
    <property type="entry name" value="Aminotran_5"/>
    <property type="match status" value="1"/>
</dbReference>
<dbReference type="PIRSF" id="PIRSF005572">
    <property type="entry name" value="NifS"/>
    <property type="match status" value="1"/>
</dbReference>
<dbReference type="SUPFAM" id="SSF53383">
    <property type="entry name" value="PLP-dependent transferases"/>
    <property type="match status" value="1"/>
</dbReference>
<dbReference type="PROSITE" id="PS00595">
    <property type="entry name" value="AA_TRANSFER_CLASS_5"/>
    <property type="match status" value="1"/>
</dbReference>
<reference key="1">
    <citation type="journal article" date="2009" name="PLoS ONE">
        <title>Salmonella paratyphi C: genetic divergence from Salmonella choleraesuis and pathogenic convergence with Salmonella typhi.</title>
        <authorList>
            <person name="Liu W.-Q."/>
            <person name="Feng Y."/>
            <person name="Wang Y."/>
            <person name="Zou Q.-H."/>
            <person name="Chen F."/>
            <person name="Guo J.-T."/>
            <person name="Peng Y.-H."/>
            <person name="Jin Y."/>
            <person name="Li Y.-G."/>
            <person name="Hu S.-N."/>
            <person name="Johnston R.N."/>
            <person name="Liu G.-R."/>
            <person name="Liu S.-L."/>
        </authorList>
    </citation>
    <scope>NUCLEOTIDE SEQUENCE [LARGE SCALE GENOMIC DNA]</scope>
    <source>
        <strain>RKS4594</strain>
    </source>
</reference>